<keyword id="KW-0150">Chloroplast</keyword>
<keyword id="KW-0934">Plastid</keyword>
<keyword id="KW-0687">Ribonucleoprotein</keyword>
<keyword id="KW-0689">Ribosomal protein</keyword>
<keyword id="KW-0694">RNA-binding</keyword>
<keyword id="KW-0699">rRNA-binding</keyword>
<sequence>MPTIQQLIRSERQTIQKTKSPALKSCPQRRGVCTRVYTTTPKKPNSALRKVARVRLTSGFEVTAYIPGIGHNIQEHSVVLLRGGRVKDLPGVRYHIIRGTLDAAGVKNRKQSRSKYGAKKPKE</sequence>
<gene>
    <name type="primary">rps12</name>
</gene>
<accession>P19461</accession>
<proteinExistence type="inferred from homology"/>
<name>RR12_GUITH</name>
<organism>
    <name type="scientific">Guillardia theta</name>
    <name type="common">Cryptophyte</name>
    <name type="synonym">Cryptomonas phi</name>
    <dbReference type="NCBI Taxonomy" id="55529"/>
    <lineage>
        <taxon>Eukaryota</taxon>
        <taxon>Cryptophyceae</taxon>
        <taxon>Pyrenomonadales</taxon>
        <taxon>Geminigeraceae</taxon>
        <taxon>Guillardia</taxon>
    </lineage>
</organism>
<comment type="function">
    <text evidence="1">With S4 and S5 plays an important role in translational accuracy. Located at the interface of the 30S and 50S subunits (By similarity).</text>
</comment>
<comment type="subunit">
    <text>Part of the 30S ribosomal subunit.</text>
</comment>
<comment type="subcellular location">
    <subcellularLocation>
        <location>Plastid</location>
        <location>Chloroplast</location>
    </subcellularLocation>
</comment>
<comment type="similarity">
    <text evidence="3">Belongs to the universal ribosomal protein uS12 family.</text>
</comment>
<protein>
    <recommendedName>
        <fullName evidence="3">Small ribosomal subunit protein uS12c</fullName>
    </recommendedName>
    <alternativeName>
        <fullName>30S ribosomal protein S12, chloroplastic</fullName>
    </alternativeName>
</protein>
<reference key="1">
    <citation type="journal article" date="1991" name="Curr. Genet.">
        <title>Unusual organization of a ribosomal protein operon in the plastid genome of Cryptomonas phi: evolutionary considerations.</title>
        <authorList>
            <person name="Douglas S.E."/>
        </authorList>
    </citation>
    <scope>NUCLEOTIDE SEQUENCE [GENOMIC DNA]</scope>
</reference>
<reference key="2">
    <citation type="journal article" date="1997" name="Biochem. Mol. Biol. Int.">
        <title>The large ribosomal protein gene cluster of a cryptomonad plastid: gene organization, sequence and evolutionary implications.</title>
        <authorList>
            <person name="Wang S.L."/>
            <person name="Liu X.-Q."/>
            <person name="Douglas S.E."/>
        </authorList>
    </citation>
    <scope>NUCLEOTIDE SEQUENCE [GENOMIC DNA]</scope>
</reference>
<dbReference type="EMBL" id="AF041468">
    <property type="protein sequence ID" value="AAC35728.1"/>
    <property type="molecule type" value="Genomic_DNA"/>
</dbReference>
<dbReference type="RefSeq" id="NP_050794.1">
    <property type="nucleotide sequence ID" value="NC_000926.1"/>
</dbReference>
<dbReference type="SMR" id="P19461"/>
<dbReference type="GeneID" id="857102"/>
<dbReference type="HOGENOM" id="CLU_104295_1_2_1"/>
<dbReference type="OMA" id="VCIRVYT"/>
<dbReference type="GO" id="GO:0009507">
    <property type="term" value="C:chloroplast"/>
    <property type="evidence" value="ECO:0007669"/>
    <property type="project" value="UniProtKB-SubCell"/>
</dbReference>
<dbReference type="GO" id="GO:0015935">
    <property type="term" value="C:small ribosomal subunit"/>
    <property type="evidence" value="ECO:0007669"/>
    <property type="project" value="InterPro"/>
</dbReference>
<dbReference type="GO" id="GO:0019843">
    <property type="term" value="F:rRNA binding"/>
    <property type="evidence" value="ECO:0007669"/>
    <property type="project" value="UniProtKB-UniRule"/>
</dbReference>
<dbReference type="GO" id="GO:0003735">
    <property type="term" value="F:structural constituent of ribosome"/>
    <property type="evidence" value="ECO:0007669"/>
    <property type="project" value="InterPro"/>
</dbReference>
<dbReference type="GO" id="GO:0006412">
    <property type="term" value="P:translation"/>
    <property type="evidence" value="ECO:0007669"/>
    <property type="project" value="UniProtKB-UniRule"/>
</dbReference>
<dbReference type="CDD" id="cd03368">
    <property type="entry name" value="Ribosomal_S12"/>
    <property type="match status" value="1"/>
</dbReference>
<dbReference type="FunFam" id="2.40.50.140:FF:000001">
    <property type="entry name" value="30S ribosomal protein S12"/>
    <property type="match status" value="1"/>
</dbReference>
<dbReference type="Gene3D" id="2.40.50.140">
    <property type="entry name" value="Nucleic acid-binding proteins"/>
    <property type="match status" value="1"/>
</dbReference>
<dbReference type="HAMAP" id="MF_00403_B">
    <property type="entry name" value="Ribosomal_uS12_B"/>
    <property type="match status" value="1"/>
</dbReference>
<dbReference type="InterPro" id="IPR012340">
    <property type="entry name" value="NA-bd_OB-fold"/>
</dbReference>
<dbReference type="InterPro" id="IPR006032">
    <property type="entry name" value="Ribosomal_uS12"/>
</dbReference>
<dbReference type="InterPro" id="IPR005679">
    <property type="entry name" value="Ribosomal_uS12_bac"/>
</dbReference>
<dbReference type="NCBIfam" id="TIGR00981">
    <property type="entry name" value="rpsL_bact"/>
    <property type="match status" value="1"/>
</dbReference>
<dbReference type="PANTHER" id="PTHR11652">
    <property type="entry name" value="30S RIBOSOMAL PROTEIN S12 FAMILY MEMBER"/>
    <property type="match status" value="1"/>
</dbReference>
<dbReference type="Pfam" id="PF00164">
    <property type="entry name" value="Ribosom_S12_S23"/>
    <property type="match status" value="1"/>
</dbReference>
<dbReference type="PIRSF" id="PIRSF002133">
    <property type="entry name" value="Ribosomal_S12/S23"/>
    <property type="match status" value="1"/>
</dbReference>
<dbReference type="PRINTS" id="PR01034">
    <property type="entry name" value="RIBOSOMALS12"/>
</dbReference>
<dbReference type="SUPFAM" id="SSF50249">
    <property type="entry name" value="Nucleic acid-binding proteins"/>
    <property type="match status" value="1"/>
</dbReference>
<dbReference type="PROSITE" id="PS00055">
    <property type="entry name" value="RIBOSOMAL_S12"/>
    <property type="match status" value="1"/>
</dbReference>
<geneLocation type="chloroplast"/>
<feature type="chain" id="PRO_0000146403" description="Small ribosomal subunit protein uS12c">
    <location>
        <begin position="1"/>
        <end position="123"/>
    </location>
</feature>
<feature type="region of interest" description="Disordered" evidence="2">
    <location>
        <begin position="103"/>
        <end position="123"/>
    </location>
</feature>
<feature type="compositionally biased region" description="Basic residues" evidence="2">
    <location>
        <begin position="107"/>
        <end position="123"/>
    </location>
</feature>
<evidence type="ECO:0000250" key="1"/>
<evidence type="ECO:0000256" key="2">
    <source>
        <dbReference type="SAM" id="MobiDB-lite"/>
    </source>
</evidence>
<evidence type="ECO:0000305" key="3"/>